<gene>
    <name type="primary">Ntf3</name>
    <name type="synonym">Ntf-3</name>
</gene>
<protein>
    <recommendedName>
        <fullName>Neurotrophin-3</fullName>
        <shortName>NT-3</shortName>
    </recommendedName>
    <alternativeName>
        <fullName>HDNF</fullName>
    </alternativeName>
    <alternativeName>
        <fullName>Nerve growth factor 2</fullName>
        <shortName>NGF-2</shortName>
    </alternativeName>
    <alternativeName>
        <fullName>Neurotrophic factor</fullName>
    </alternativeName>
</protein>
<dbReference type="EMBL" id="M34643">
    <property type="protein sequence ID" value="AAA41313.1"/>
    <property type="molecule type" value="mRNA"/>
</dbReference>
<dbReference type="EMBL" id="M33968">
    <property type="protein sequence ID" value="AAA41727.1"/>
    <property type="molecule type" value="Genomic_DNA"/>
</dbReference>
<dbReference type="EMBL" id="M61179">
    <property type="protein sequence ID" value="AAA63497.1"/>
    <property type="molecule type" value="Genomic_DNA"/>
</dbReference>
<dbReference type="EMBL" id="BC070504">
    <property type="protein sequence ID" value="AAH70504.1"/>
    <property type="molecule type" value="mRNA"/>
</dbReference>
<dbReference type="PIR" id="A35781">
    <property type="entry name" value="A35781"/>
</dbReference>
<dbReference type="RefSeq" id="NP_001257797.1">
    <property type="nucleotide sequence ID" value="NM_001270868.1"/>
</dbReference>
<dbReference type="RefSeq" id="NP_001257798.1">
    <property type="nucleotide sequence ID" value="NM_001270869.1"/>
</dbReference>
<dbReference type="RefSeq" id="NP_001257799.1">
    <property type="nucleotide sequence ID" value="NM_001270870.1"/>
</dbReference>
<dbReference type="RefSeq" id="NP_112335.3">
    <property type="nucleotide sequence ID" value="NM_031073.3"/>
</dbReference>
<dbReference type="RefSeq" id="XP_063142820.1">
    <property type="nucleotide sequence ID" value="XM_063286750.1"/>
</dbReference>
<dbReference type="SMR" id="P18280"/>
<dbReference type="FunCoup" id="P18280">
    <property type="interactions" value="468"/>
</dbReference>
<dbReference type="STRING" id="10116.ENSRNOP00000070420"/>
<dbReference type="GlyCosmos" id="P18280">
    <property type="glycosylation" value="1 site, No reported glycans"/>
</dbReference>
<dbReference type="GlyGen" id="P18280">
    <property type="glycosylation" value="1 site"/>
</dbReference>
<dbReference type="PhosphoSitePlus" id="P18280"/>
<dbReference type="PaxDb" id="10116-ENSRNOP00000026685"/>
<dbReference type="Ensembl" id="ENSRNOT00000026685.6">
    <property type="protein sequence ID" value="ENSRNOP00000026685.3"/>
    <property type="gene ID" value="ENSRNOG00000019716.6"/>
</dbReference>
<dbReference type="Ensembl" id="ENSRNOT00000115703.1">
    <property type="protein sequence ID" value="ENSRNOP00000090293.1"/>
    <property type="gene ID" value="ENSRNOG00000019716.6"/>
</dbReference>
<dbReference type="GeneID" id="81737"/>
<dbReference type="KEGG" id="rno:81737"/>
<dbReference type="UCSC" id="RGD:619728">
    <property type="organism name" value="rat"/>
</dbReference>
<dbReference type="AGR" id="RGD:619728"/>
<dbReference type="CTD" id="4908"/>
<dbReference type="RGD" id="619728">
    <property type="gene designation" value="Ntf3"/>
</dbReference>
<dbReference type="eggNOG" id="ENOG502R4FK">
    <property type="taxonomic scope" value="Eukaryota"/>
</dbReference>
<dbReference type="GeneTree" id="ENSGT00390000007725"/>
<dbReference type="HOGENOM" id="CLU_059942_1_1_1"/>
<dbReference type="InParanoid" id="P18280"/>
<dbReference type="OMA" id="FQPMIAM"/>
<dbReference type="OrthoDB" id="8518at9989"/>
<dbReference type="PhylomeDB" id="P18280"/>
<dbReference type="TreeFam" id="TF106463"/>
<dbReference type="Reactome" id="R-RNO-1257604">
    <property type="pathway name" value="PIP3 activates AKT signaling"/>
</dbReference>
<dbReference type="Reactome" id="R-RNO-6811558">
    <property type="pathway name" value="PI5P, PP2A and IER3 Regulate PI3K/AKT Signaling"/>
</dbReference>
<dbReference type="Reactome" id="R-RNO-9034013">
    <property type="pathway name" value="NTF3 activates NTRK3 signaling"/>
</dbReference>
<dbReference type="Reactome" id="R-RNO-9034793">
    <property type="pathway name" value="Activated NTRK3 signals through PLCG1"/>
</dbReference>
<dbReference type="Reactome" id="R-RNO-9603381">
    <property type="pathway name" value="Activated NTRK3 signals through PI3K"/>
</dbReference>
<dbReference type="PRO" id="PR:P18280"/>
<dbReference type="Proteomes" id="UP000002494">
    <property type="component" value="Chromosome 4"/>
</dbReference>
<dbReference type="Bgee" id="ENSRNOG00000019716">
    <property type="expression patterns" value="Expressed in kidney and 19 other cell types or tissues"/>
</dbReference>
<dbReference type="ExpressionAtlas" id="P18280">
    <property type="expression patterns" value="baseline and differential"/>
</dbReference>
<dbReference type="GO" id="GO:0030424">
    <property type="term" value="C:axon"/>
    <property type="evidence" value="ECO:0000318"/>
    <property type="project" value="GO_Central"/>
</dbReference>
<dbReference type="GO" id="GO:0031410">
    <property type="term" value="C:cytoplasmic vesicle"/>
    <property type="evidence" value="ECO:0000266"/>
    <property type="project" value="RGD"/>
</dbReference>
<dbReference type="GO" id="GO:0030425">
    <property type="term" value="C:dendrite"/>
    <property type="evidence" value="ECO:0000318"/>
    <property type="project" value="GO_Central"/>
</dbReference>
<dbReference type="GO" id="GO:0005576">
    <property type="term" value="C:extracellular region"/>
    <property type="evidence" value="ECO:0000304"/>
    <property type="project" value="Reactome"/>
</dbReference>
<dbReference type="GO" id="GO:0005615">
    <property type="term" value="C:extracellular space"/>
    <property type="evidence" value="ECO:0000318"/>
    <property type="project" value="GO_Central"/>
</dbReference>
<dbReference type="GO" id="GO:0008021">
    <property type="term" value="C:synaptic vesicle"/>
    <property type="evidence" value="ECO:0000318"/>
    <property type="project" value="GO_Central"/>
</dbReference>
<dbReference type="GO" id="GO:0042056">
    <property type="term" value="F:chemoattractant activity"/>
    <property type="evidence" value="ECO:0000266"/>
    <property type="project" value="RGD"/>
</dbReference>
<dbReference type="GO" id="GO:0008083">
    <property type="term" value="F:growth factor activity"/>
    <property type="evidence" value="ECO:0000266"/>
    <property type="project" value="RGD"/>
</dbReference>
<dbReference type="GO" id="GO:0048406">
    <property type="term" value="F:nerve growth factor binding"/>
    <property type="evidence" value="ECO:0000315"/>
    <property type="project" value="RGD"/>
</dbReference>
<dbReference type="GO" id="GO:0005163">
    <property type="term" value="F:nerve growth factor receptor binding"/>
    <property type="evidence" value="ECO:0000318"/>
    <property type="project" value="GO_Central"/>
</dbReference>
<dbReference type="GO" id="GO:0007411">
    <property type="term" value="P:axon guidance"/>
    <property type="evidence" value="ECO:0000266"/>
    <property type="project" value="RGD"/>
</dbReference>
<dbReference type="GO" id="GO:0007420">
    <property type="term" value="P:brain development"/>
    <property type="evidence" value="ECO:0000266"/>
    <property type="project" value="RGD"/>
</dbReference>
<dbReference type="GO" id="GO:0007169">
    <property type="term" value="P:cell surface receptor protein tyrosine kinase signaling pathway"/>
    <property type="evidence" value="ECO:0000266"/>
    <property type="project" value="RGD"/>
</dbReference>
<dbReference type="GO" id="GO:0048484">
    <property type="term" value="P:enteric nervous system development"/>
    <property type="evidence" value="ECO:0000266"/>
    <property type="project" value="RGD"/>
</dbReference>
<dbReference type="GO" id="GO:0008544">
    <property type="term" value="P:epidermis development"/>
    <property type="evidence" value="ECO:0000266"/>
    <property type="project" value="RGD"/>
</dbReference>
<dbReference type="GO" id="GO:0048699">
    <property type="term" value="P:generation of neurons"/>
    <property type="evidence" value="ECO:0000266"/>
    <property type="project" value="RGD"/>
</dbReference>
<dbReference type="GO" id="GO:0007403">
    <property type="term" value="P:glial cell fate determination"/>
    <property type="evidence" value="ECO:0000266"/>
    <property type="project" value="RGD"/>
</dbReference>
<dbReference type="GO" id="GO:0050930">
    <property type="term" value="P:induction of positive chemotaxis"/>
    <property type="evidence" value="ECO:0000266"/>
    <property type="project" value="RGD"/>
</dbReference>
<dbReference type="GO" id="GO:0042490">
    <property type="term" value="P:mechanoreceptor differentiation"/>
    <property type="evidence" value="ECO:0000266"/>
    <property type="project" value="RGD"/>
</dbReference>
<dbReference type="GO" id="GO:0050804">
    <property type="term" value="P:modulation of chemical synaptic transmission"/>
    <property type="evidence" value="ECO:0000314"/>
    <property type="project" value="RGD"/>
</dbReference>
<dbReference type="GO" id="GO:0042552">
    <property type="term" value="P:myelination"/>
    <property type="evidence" value="ECO:0000314"/>
    <property type="project" value="RGD"/>
</dbReference>
<dbReference type="GO" id="GO:0043524">
    <property type="term" value="P:negative regulation of neuron apoptotic process"/>
    <property type="evidence" value="ECO:0000266"/>
    <property type="project" value="RGD"/>
</dbReference>
<dbReference type="GO" id="GO:0021675">
    <property type="term" value="P:nerve development"/>
    <property type="evidence" value="ECO:0000266"/>
    <property type="project" value="RGD"/>
</dbReference>
<dbReference type="GO" id="GO:0038180">
    <property type="term" value="P:nerve growth factor signaling pathway"/>
    <property type="evidence" value="ECO:0000318"/>
    <property type="project" value="GO_Central"/>
</dbReference>
<dbReference type="GO" id="GO:0007399">
    <property type="term" value="P:nervous system development"/>
    <property type="evidence" value="ECO:0000315"/>
    <property type="project" value="RGD"/>
</dbReference>
<dbReference type="GO" id="GO:0007274">
    <property type="term" value="P:neuromuscular synaptic transmission"/>
    <property type="evidence" value="ECO:0000266"/>
    <property type="project" value="RGD"/>
</dbReference>
<dbReference type="GO" id="GO:0051402">
    <property type="term" value="P:neuron apoptotic process"/>
    <property type="evidence" value="ECO:0000266"/>
    <property type="project" value="RGD"/>
</dbReference>
<dbReference type="GO" id="GO:0048666">
    <property type="term" value="P:neuron development"/>
    <property type="evidence" value="ECO:0000266"/>
    <property type="project" value="RGD"/>
</dbReference>
<dbReference type="GO" id="GO:0048812">
    <property type="term" value="P:neuron projection morphogenesis"/>
    <property type="evidence" value="ECO:0000318"/>
    <property type="project" value="GO_Central"/>
</dbReference>
<dbReference type="GO" id="GO:0007422">
    <property type="term" value="P:peripheral nervous system development"/>
    <property type="evidence" value="ECO:0000266"/>
    <property type="project" value="RGD"/>
</dbReference>
<dbReference type="GO" id="GO:0030335">
    <property type="term" value="P:positive regulation of cell migration"/>
    <property type="evidence" value="ECO:0000266"/>
    <property type="project" value="RGD"/>
</dbReference>
<dbReference type="GO" id="GO:0008284">
    <property type="term" value="P:positive regulation of cell population proliferation"/>
    <property type="evidence" value="ECO:0000266"/>
    <property type="project" value="RGD"/>
</dbReference>
<dbReference type="GO" id="GO:0045687">
    <property type="term" value="P:positive regulation of glial cell differentiation"/>
    <property type="evidence" value="ECO:0000314"/>
    <property type="project" value="RGD"/>
</dbReference>
<dbReference type="GO" id="GO:0043410">
    <property type="term" value="P:positive regulation of MAPK cascade"/>
    <property type="evidence" value="ECO:0000266"/>
    <property type="project" value="RGD"/>
</dbReference>
<dbReference type="GO" id="GO:0051897">
    <property type="term" value="P:positive regulation of phosphatidylinositol 3-kinase/protein kinase B signal transduction"/>
    <property type="evidence" value="ECO:0000266"/>
    <property type="project" value="RGD"/>
</dbReference>
<dbReference type="GO" id="GO:0002092">
    <property type="term" value="P:positive regulation of receptor internalization"/>
    <property type="evidence" value="ECO:0000266"/>
    <property type="project" value="RGD"/>
</dbReference>
<dbReference type="GO" id="GO:0045944">
    <property type="term" value="P:positive regulation of transcription by RNA polymerase II"/>
    <property type="evidence" value="ECO:0000266"/>
    <property type="project" value="RGD"/>
</dbReference>
<dbReference type="GO" id="GO:0042981">
    <property type="term" value="P:regulation of apoptotic process"/>
    <property type="evidence" value="ECO:0000266"/>
    <property type="project" value="RGD"/>
</dbReference>
<dbReference type="GO" id="GO:0043523">
    <property type="term" value="P:regulation of neuron apoptotic process"/>
    <property type="evidence" value="ECO:0000266"/>
    <property type="project" value="RGD"/>
</dbReference>
<dbReference type="GO" id="GO:0035902">
    <property type="term" value="P:response to immobilization stress"/>
    <property type="evidence" value="ECO:0000270"/>
    <property type="project" value="RGD"/>
</dbReference>
<dbReference type="GO" id="GO:0051145">
    <property type="term" value="P:smooth muscle cell differentiation"/>
    <property type="evidence" value="ECO:0000266"/>
    <property type="project" value="RGD"/>
</dbReference>
<dbReference type="FunFam" id="2.10.90.10:FF:000002">
    <property type="entry name" value="Brain-derived neurotrophic factor"/>
    <property type="match status" value="1"/>
</dbReference>
<dbReference type="Gene3D" id="2.10.90.10">
    <property type="entry name" value="Cystine-knot cytokines"/>
    <property type="match status" value="1"/>
</dbReference>
<dbReference type="InterPro" id="IPR029034">
    <property type="entry name" value="Cystine-knot_cytokine"/>
</dbReference>
<dbReference type="InterPro" id="IPR020408">
    <property type="entry name" value="Nerve_growth_factor-like"/>
</dbReference>
<dbReference type="InterPro" id="IPR002072">
    <property type="entry name" value="Nerve_growth_factor-rel"/>
</dbReference>
<dbReference type="InterPro" id="IPR019846">
    <property type="entry name" value="Nerve_growth_factor_CS"/>
</dbReference>
<dbReference type="InterPro" id="IPR015578">
    <property type="entry name" value="Neurotrophin-3"/>
</dbReference>
<dbReference type="InterPro" id="IPR045815">
    <property type="entry name" value="NTF3_N"/>
</dbReference>
<dbReference type="PANTHER" id="PTHR11589">
    <property type="entry name" value="NERVE GROWTH FACTOR NGF -RELATED"/>
    <property type="match status" value="1"/>
</dbReference>
<dbReference type="PANTHER" id="PTHR11589:SF4">
    <property type="entry name" value="NEUROTROPHIN-3"/>
    <property type="match status" value="1"/>
</dbReference>
<dbReference type="Pfam" id="PF00243">
    <property type="entry name" value="NGF"/>
    <property type="match status" value="1"/>
</dbReference>
<dbReference type="Pfam" id="PF19338">
    <property type="entry name" value="NTF3_N"/>
    <property type="match status" value="1"/>
</dbReference>
<dbReference type="PIRSF" id="PIRSF001789">
    <property type="entry name" value="NGF"/>
    <property type="match status" value="1"/>
</dbReference>
<dbReference type="PRINTS" id="PR01914">
    <property type="entry name" value="NEUROTROPHN3"/>
</dbReference>
<dbReference type="PRINTS" id="PR00268">
    <property type="entry name" value="NGF"/>
</dbReference>
<dbReference type="SMART" id="SM00140">
    <property type="entry name" value="NGF"/>
    <property type="match status" value="1"/>
</dbReference>
<dbReference type="SUPFAM" id="SSF57501">
    <property type="entry name" value="Cystine-knot cytokines"/>
    <property type="match status" value="1"/>
</dbReference>
<dbReference type="PROSITE" id="PS00248">
    <property type="entry name" value="NGF_1"/>
    <property type="match status" value="1"/>
</dbReference>
<dbReference type="PROSITE" id="PS50270">
    <property type="entry name" value="NGF_2"/>
    <property type="match status" value="1"/>
</dbReference>
<accession>P18280</accession>
<accession>Q6NS33</accession>
<name>NTF3_RAT</name>
<feature type="signal peptide" evidence="2">
    <location>
        <begin position="1"/>
        <end position="18"/>
    </location>
</feature>
<feature type="propeptide" id="PRO_0000019663">
    <location>
        <begin position="19"/>
        <end position="139"/>
    </location>
</feature>
<feature type="chain" id="PRO_0000019664" description="Neurotrophin-3">
    <location>
        <begin position="140"/>
        <end position="258"/>
    </location>
</feature>
<feature type="region of interest" description="Disordered" evidence="3">
    <location>
        <begin position="60"/>
        <end position="85"/>
    </location>
</feature>
<feature type="compositionally biased region" description="Basic and acidic residues" evidence="3">
    <location>
        <begin position="67"/>
        <end position="79"/>
    </location>
</feature>
<feature type="glycosylation site" description="N-linked (GlcNAc...) asparagine" evidence="2">
    <location>
        <position position="131"/>
    </location>
</feature>
<feature type="disulfide bond" evidence="1">
    <location>
        <begin position="153"/>
        <end position="218"/>
    </location>
</feature>
<feature type="disulfide bond" evidence="1">
    <location>
        <begin position="196"/>
        <end position="247"/>
    </location>
</feature>
<feature type="disulfide bond" evidence="1">
    <location>
        <begin position="206"/>
        <end position="249"/>
    </location>
</feature>
<feature type="sequence conflict" description="In Ref. 4; AAH70504." evidence="4" ref="4">
    <original>C</original>
    <variation>R</variation>
    <location>
        <position position="218"/>
    </location>
</feature>
<reference key="1">
    <citation type="journal article" date="1990" name="Proc. Natl. Acad. Sci. U.S.A.">
        <title>Molecular cloning and neurotrophic activities of a protein with structural similarities to nerve growth factor: developmental and topographical expression in the brain.</title>
        <authorList>
            <person name="Ernfors P."/>
            <person name="Ibanez C.F."/>
            <person name="Ebendal T."/>
            <person name="Olson L."/>
            <person name="Persson H."/>
        </authorList>
    </citation>
    <scope>NUCLEOTIDE SEQUENCE [MRNA]</scope>
</reference>
<reference key="2">
    <citation type="journal article" date="1990" name="Science">
        <title>Neurotrophin-3: a neurotrophic factor related to NGF and BDNF.</title>
        <authorList>
            <person name="Maisonpierre P.C."/>
            <person name="Belluscio L."/>
            <person name="Squinto S."/>
            <person name="Ip N.Y."/>
            <person name="Furth M.E."/>
            <person name="Lindsay R.M."/>
            <person name="Yancopoulos G.D."/>
        </authorList>
    </citation>
    <scope>NUCLEOTIDE SEQUENCE [GENOMIC DNA]</scope>
</reference>
<reference key="3">
    <citation type="journal article" date="1991" name="Genomics">
        <title>Human and rat brain-derived neurotrophic factor and neurotrophin-3: gene structures, distributions, and chromosomal localizations.</title>
        <authorList>
            <person name="Maisonpierre P.C."/>
            <person name="le Beau M.M."/>
            <person name="Espinosa R. III"/>
            <person name="Ip N.Y."/>
            <person name="Belluscio L."/>
            <person name="de la Monte S.M."/>
            <person name="Squinto S."/>
            <person name="Furth M.E."/>
            <person name="Yancopoulos G.D."/>
        </authorList>
    </citation>
    <scope>NUCLEOTIDE SEQUENCE [GENOMIC DNA]</scope>
</reference>
<reference key="4">
    <citation type="journal article" date="2004" name="Genome Res.">
        <title>The status, quality, and expansion of the NIH full-length cDNA project: the Mammalian Gene Collection (MGC).</title>
        <authorList>
            <consortium name="The MGC Project Team"/>
        </authorList>
    </citation>
    <scope>NUCLEOTIDE SEQUENCE [LARGE SCALE MRNA]</scope>
    <source>
        <tissue>Lung</tissue>
    </source>
</reference>
<reference key="5">
    <citation type="journal article" date="1991" name="Neuron">
        <title>Evolutionary studies of the nerve growth factor family reveal a novel member abundantly expressed in Xenopus ovary.</title>
        <authorList>
            <person name="Hallboeoek F."/>
            <person name="Ibanez C.F."/>
            <person name="Persson H."/>
        </authorList>
    </citation>
    <scope>NUCLEOTIDE SEQUENCE OF 195-237</scope>
    <source>
        <strain>Sprague-Dawley</strain>
        <tissue>Liver</tissue>
    </source>
</reference>
<proteinExistence type="evidence at transcript level"/>
<sequence length="258" mass="29645">MSILFYVIFLAYLRGIQGNNMDQRSLPEDSLNSLIIKLIQADILKNKLSKQMVDVKENYQSTLPKAEAPREPEQGEATRSEFQPMIATDTELLRQQRRYNSPRVLLSDSTPLEPPPLYLMEDYVGNPVVTNRTSPRRKRYAEHKSHRGEYSVCDSESLWVTDKSSAIDIRGHQVTVLGEIKTGNSPVKQYFYETRCKEARPVKNGCRGIDDKHWNSQCKTSQTYVRALTSENNKLVGWRWIRIDTSCVCALSRKIGRT</sequence>
<comment type="function">
    <text>Seems to promote the survival of visceral and proprioceptive sensory neurons.</text>
</comment>
<comment type="subcellular location">
    <subcellularLocation>
        <location>Secreted</location>
    </subcellularLocation>
</comment>
<comment type="tissue specificity">
    <text>Brain and peripheral tissues.</text>
</comment>
<comment type="similarity">
    <text evidence="4">Belongs to the NGF-beta family.</text>
</comment>
<evidence type="ECO:0000250" key="1"/>
<evidence type="ECO:0000255" key="2"/>
<evidence type="ECO:0000256" key="3">
    <source>
        <dbReference type="SAM" id="MobiDB-lite"/>
    </source>
</evidence>
<evidence type="ECO:0000305" key="4"/>
<keyword id="KW-0165">Cleavage on pair of basic residues</keyword>
<keyword id="KW-1015">Disulfide bond</keyword>
<keyword id="KW-0325">Glycoprotein</keyword>
<keyword id="KW-0339">Growth factor</keyword>
<keyword id="KW-1185">Reference proteome</keyword>
<keyword id="KW-0964">Secreted</keyword>
<keyword id="KW-0732">Signal</keyword>
<organism>
    <name type="scientific">Rattus norvegicus</name>
    <name type="common">Rat</name>
    <dbReference type="NCBI Taxonomy" id="10116"/>
    <lineage>
        <taxon>Eukaryota</taxon>
        <taxon>Metazoa</taxon>
        <taxon>Chordata</taxon>
        <taxon>Craniata</taxon>
        <taxon>Vertebrata</taxon>
        <taxon>Euteleostomi</taxon>
        <taxon>Mammalia</taxon>
        <taxon>Eutheria</taxon>
        <taxon>Euarchontoglires</taxon>
        <taxon>Glires</taxon>
        <taxon>Rodentia</taxon>
        <taxon>Myomorpha</taxon>
        <taxon>Muroidea</taxon>
        <taxon>Muridae</taxon>
        <taxon>Murinae</taxon>
        <taxon>Rattus</taxon>
    </lineage>
</organism>